<comment type="function">
    <text>Alpha-2 adrenergic receptors mediate the catecholamine-induced inhibition of adenylate cyclase through the action of G proteins.</text>
</comment>
<comment type="subcellular location">
    <subcellularLocation>
        <location>Cell membrane</location>
        <topology>Multi-pass membrane protein</topology>
    </subcellularLocation>
</comment>
<comment type="similarity">
    <text evidence="3">Belongs to the G-protein coupled receptor 1 family.</text>
</comment>
<keyword id="KW-1003">Cell membrane</keyword>
<keyword id="KW-1015">Disulfide bond</keyword>
<keyword id="KW-0297">G-protein coupled receptor</keyword>
<keyword id="KW-0325">Glycoprotein</keyword>
<keyword id="KW-0472">Membrane</keyword>
<keyword id="KW-0675">Receptor</keyword>
<keyword id="KW-1185">Reference proteome</keyword>
<keyword id="KW-0807">Transducer</keyword>
<keyword id="KW-0812">Transmembrane</keyword>
<keyword id="KW-1133">Transmembrane helix</keyword>
<organism>
    <name type="scientific">Carassius auratus</name>
    <name type="common">Goldfish</name>
    <dbReference type="NCBI Taxonomy" id="7957"/>
    <lineage>
        <taxon>Eukaryota</taxon>
        <taxon>Metazoa</taxon>
        <taxon>Chordata</taxon>
        <taxon>Craniata</taxon>
        <taxon>Vertebrata</taxon>
        <taxon>Euteleostomi</taxon>
        <taxon>Actinopterygii</taxon>
        <taxon>Neopterygii</taxon>
        <taxon>Teleostei</taxon>
        <taxon>Ostariophysi</taxon>
        <taxon>Cypriniformes</taxon>
        <taxon>Cyprinidae</taxon>
        <taxon>Cyprininae</taxon>
        <taxon>Carassius</taxon>
    </lineage>
</organism>
<dbReference type="EMBL" id="L09064">
    <property type="protein sequence ID" value="AAA49163.1"/>
    <property type="molecule type" value="Genomic_DNA"/>
</dbReference>
<dbReference type="SMR" id="P32251"/>
<dbReference type="Proteomes" id="UP000515129">
    <property type="component" value="Unplaced"/>
</dbReference>
<dbReference type="GO" id="GO:0005886">
    <property type="term" value="C:plasma membrane"/>
    <property type="evidence" value="ECO:0007669"/>
    <property type="project" value="UniProtKB-SubCell"/>
</dbReference>
<dbReference type="GO" id="GO:0004938">
    <property type="term" value="F:alpha2-adrenergic receptor activity"/>
    <property type="evidence" value="ECO:0007669"/>
    <property type="project" value="TreeGrafter"/>
</dbReference>
<dbReference type="GO" id="GO:0051379">
    <property type="term" value="F:epinephrine binding"/>
    <property type="evidence" value="ECO:0007669"/>
    <property type="project" value="TreeGrafter"/>
</dbReference>
<dbReference type="GO" id="GO:0071881">
    <property type="term" value="P:adenylate cyclase-inhibiting adrenergic receptor signaling pathway"/>
    <property type="evidence" value="ECO:0007669"/>
    <property type="project" value="UniProtKB-ARBA"/>
</dbReference>
<dbReference type="CDD" id="cd15324">
    <property type="entry name" value="7tmA_alpha-2D_AR"/>
    <property type="match status" value="1"/>
</dbReference>
<dbReference type="Gene3D" id="1.20.1070.10">
    <property type="entry name" value="Rhodopsin 7-helix transmembrane proteins"/>
    <property type="match status" value="1"/>
</dbReference>
<dbReference type="InterPro" id="IPR002233">
    <property type="entry name" value="ADR_fam"/>
</dbReference>
<dbReference type="InterPro" id="IPR000276">
    <property type="entry name" value="GPCR_Rhodpsn"/>
</dbReference>
<dbReference type="InterPro" id="IPR017452">
    <property type="entry name" value="GPCR_Rhodpsn_7TM"/>
</dbReference>
<dbReference type="PANTHER" id="PTHR24248">
    <property type="entry name" value="ADRENERGIC RECEPTOR-RELATED G-PROTEIN COUPLED RECEPTOR"/>
    <property type="match status" value="1"/>
</dbReference>
<dbReference type="PANTHER" id="PTHR24248:SF0">
    <property type="entry name" value="ALPHA-2DA ADRENERGIC RECEPTOR-RELATED"/>
    <property type="match status" value="1"/>
</dbReference>
<dbReference type="Pfam" id="PF00001">
    <property type="entry name" value="7tm_1"/>
    <property type="match status" value="1"/>
</dbReference>
<dbReference type="PRINTS" id="PR01103">
    <property type="entry name" value="ADRENERGICR"/>
</dbReference>
<dbReference type="PRINTS" id="PR00237">
    <property type="entry name" value="GPCRRHODOPSN"/>
</dbReference>
<dbReference type="SMART" id="SM01381">
    <property type="entry name" value="7TM_GPCR_Srsx"/>
    <property type="match status" value="1"/>
</dbReference>
<dbReference type="SUPFAM" id="SSF81321">
    <property type="entry name" value="Family A G protein-coupled receptor-like"/>
    <property type="match status" value="1"/>
</dbReference>
<dbReference type="PROSITE" id="PS00237">
    <property type="entry name" value="G_PROTEIN_RECEP_F1_1"/>
    <property type="match status" value="1"/>
</dbReference>
<dbReference type="PROSITE" id="PS50262">
    <property type="entry name" value="G_PROTEIN_RECEP_F1_2"/>
    <property type="match status" value="1"/>
</dbReference>
<feature type="chain" id="PRO_0000069109" description="Alpha-2 adrenergic receptor">
    <location>
        <begin position="1"/>
        <end position="436"/>
    </location>
</feature>
<feature type="topological domain" description="Extracellular" evidence="1">
    <location>
        <begin position="1"/>
        <end position="27"/>
    </location>
</feature>
<feature type="transmembrane region" description="Helical; Name=1" evidence="1">
    <location>
        <begin position="28"/>
        <end position="52"/>
    </location>
</feature>
<feature type="topological domain" description="Cytoplasmic" evidence="1">
    <location>
        <begin position="53"/>
        <end position="64"/>
    </location>
</feature>
<feature type="transmembrane region" description="Helical; Name=2" evidence="1">
    <location>
        <begin position="65"/>
        <end position="90"/>
    </location>
</feature>
<feature type="topological domain" description="Extracellular" evidence="1">
    <location>
        <begin position="91"/>
        <end position="100"/>
    </location>
</feature>
<feature type="transmembrane region" description="Helical; Name=3" evidence="1">
    <location>
        <begin position="101"/>
        <end position="123"/>
    </location>
</feature>
<feature type="topological domain" description="Cytoplasmic" evidence="1">
    <location>
        <begin position="124"/>
        <end position="144"/>
    </location>
</feature>
<feature type="transmembrane region" description="Helical; Name=4" evidence="1">
    <location>
        <begin position="145"/>
        <end position="167"/>
    </location>
</feature>
<feature type="topological domain" description="Extracellular" evidence="1">
    <location>
        <begin position="168"/>
        <end position="178"/>
    </location>
</feature>
<feature type="transmembrane region" description="Helical; Name=5" evidence="1">
    <location>
        <begin position="179"/>
        <end position="202"/>
    </location>
</feature>
<feature type="topological domain" description="Cytoplasmic" evidence="1">
    <location>
        <begin position="203"/>
        <end position="329"/>
    </location>
</feature>
<feature type="transmembrane region" description="Helical; Name=6" evidence="1">
    <location>
        <begin position="330"/>
        <end position="353"/>
    </location>
</feature>
<feature type="topological domain" description="Extracellular" evidence="1">
    <location>
        <begin position="354"/>
        <end position="366"/>
    </location>
</feature>
<feature type="transmembrane region" description="Helical; Name=7" evidence="1">
    <location>
        <begin position="367"/>
        <end position="387"/>
    </location>
</feature>
<feature type="topological domain" description="Cytoplasmic" evidence="1">
    <location>
        <begin position="388"/>
        <end position="436"/>
    </location>
</feature>
<feature type="region of interest" description="Disordered" evidence="4">
    <location>
        <begin position="238"/>
        <end position="280"/>
    </location>
</feature>
<feature type="compositionally biased region" description="Acidic residues" evidence="4">
    <location>
        <begin position="257"/>
        <end position="267"/>
    </location>
</feature>
<feature type="glycosylation site" description="N-linked (GlcNAc...) asparagine" evidence="2">
    <location>
        <position position="7"/>
    </location>
</feature>
<feature type="glycosylation site" description="N-linked (GlcNAc...) asparagine" evidence="2">
    <location>
        <position position="14"/>
    </location>
</feature>
<feature type="disulfide bond" evidence="3">
    <location>
        <begin position="100"/>
        <end position="173"/>
    </location>
</feature>
<protein>
    <recommendedName>
        <fullName>Alpha-2 adrenergic receptor</fullName>
    </recommendedName>
    <alternativeName>
        <fullName>Alpha-2 adrenoreceptor</fullName>
        <shortName>Alpha-2 adrenoceptor</shortName>
    </alternativeName>
</protein>
<accession>P32251</accession>
<name>ADRA2_CARAU</name>
<evidence type="ECO:0000250" key="1"/>
<evidence type="ECO:0000255" key="2"/>
<evidence type="ECO:0000255" key="3">
    <source>
        <dbReference type="PROSITE-ProRule" id="PRU00521"/>
    </source>
</evidence>
<evidence type="ECO:0000256" key="4">
    <source>
        <dbReference type="SAM" id="MobiDB-lite"/>
    </source>
</evidence>
<sequence>MDVTQSNATKDDANITVTPWPYTETAAAFIILVVSVIILVSIVGNVLVIVAVLTSRALRAPQNLFLVSLACADILVATLVIPFSLANEIMGYWFFGSTWCAFYLALDVLFCTSSIVHLCAISLDRYWSVTKAVSYNLKRTPKRIKSMIAVVWVISAVISFPPLIMTKHDEKECLINDETWYILSSSLVSFFAPGFIMITVYCKIYRVAKQRSSTVFVAKNGLERQPSQSETCFVRKDKFEKESPSSNSSESNQRQEELDDIDLEESATSDNKPKSSRFSNRRRVDGARCCPQRTCRISWVSSQEQSSKQLAVASKTKVAQMREKRFTFVLTVVMGVFVLCWFPFFFTYSLHAICGDSCEPPEALFKLFFWIGYCNSSVNPIIYTIFNRDFRKAFKKICLLDCAAHLRDSCLGTLGRLNAKCIFECHQKSNQEETAN</sequence>
<proteinExistence type="inferred from homology"/>
<reference key="1">
    <citation type="submission" date="1993-07" db="EMBL/GenBank/DDBJ databases">
        <title>Molecular cloning and expression of goldfish adrenoceptor.</title>
        <authorList>
            <person name="Shih Y.-L."/>
            <person name="Chang N.-C.A."/>
            <person name="Chang A.C."/>
            <person name="Lo S.J."/>
        </authorList>
    </citation>
    <scope>NUCLEOTIDE SEQUENCE [GENOMIC DNA]</scope>
</reference>